<feature type="chain" id="PRO_1000197590" description="UPF0122 protein CKR_1296">
    <location>
        <begin position="1"/>
        <end position="111"/>
    </location>
</feature>
<accession>B9E1H2</accession>
<protein>
    <recommendedName>
        <fullName evidence="1">UPF0122 protein CKR_1296</fullName>
    </recommendedName>
</protein>
<gene>
    <name type="ordered locus">CKR_1296</name>
</gene>
<organism>
    <name type="scientific">Clostridium kluyveri (strain NBRC 12016)</name>
    <dbReference type="NCBI Taxonomy" id="583346"/>
    <lineage>
        <taxon>Bacteria</taxon>
        <taxon>Bacillati</taxon>
        <taxon>Bacillota</taxon>
        <taxon>Clostridia</taxon>
        <taxon>Eubacteriales</taxon>
        <taxon>Clostridiaceae</taxon>
        <taxon>Clostridium</taxon>
    </lineage>
</organism>
<evidence type="ECO:0000255" key="1">
    <source>
        <dbReference type="HAMAP-Rule" id="MF_00245"/>
    </source>
</evidence>
<proteinExistence type="inferred from homology"/>
<reference key="1">
    <citation type="submission" date="2005-09" db="EMBL/GenBank/DDBJ databases">
        <title>Complete genome sequence of Clostridium kluyveri and comparative genomics of Clostridia species.</title>
        <authorList>
            <person name="Inui M."/>
            <person name="Nonaka H."/>
            <person name="Shinoda Y."/>
            <person name="Ikenaga Y."/>
            <person name="Abe M."/>
            <person name="Naito K."/>
            <person name="Vertes A.A."/>
            <person name="Yukawa H."/>
        </authorList>
    </citation>
    <scope>NUCLEOTIDE SEQUENCE [LARGE SCALE GENOMIC DNA]</scope>
    <source>
        <strain>NBRC 12016</strain>
    </source>
</reference>
<sequence>MEERIRLSILLDIYGELLTEKQRNVLDLYYNQDLSLAEIAEHTSTSRQAVYDIIKRCHMLLVHYEDKLNLMEEKKNIEENKKGIIDFIDSLYSDKNAEVLDKIKNYIMNNI</sequence>
<name>Y1296_CLOK1</name>
<comment type="function">
    <text evidence="1">Might take part in the signal recognition particle (SRP) pathway. This is inferred from the conservation of its genetic proximity to ftsY/ffh. May be a regulatory protein.</text>
</comment>
<comment type="similarity">
    <text evidence="1">Belongs to the UPF0122 family.</text>
</comment>
<dbReference type="EMBL" id="AP009049">
    <property type="protein sequence ID" value="BAH06347.1"/>
    <property type="molecule type" value="Genomic_DNA"/>
</dbReference>
<dbReference type="RefSeq" id="WP_012101789.1">
    <property type="nucleotide sequence ID" value="NC_011837.1"/>
</dbReference>
<dbReference type="SMR" id="B9E1H2"/>
<dbReference type="KEGG" id="ckr:CKR_1296"/>
<dbReference type="HOGENOM" id="CLU_129218_0_1_9"/>
<dbReference type="Proteomes" id="UP000007969">
    <property type="component" value="Chromosome"/>
</dbReference>
<dbReference type="Gene3D" id="1.10.10.10">
    <property type="entry name" value="Winged helix-like DNA-binding domain superfamily/Winged helix DNA-binding domain"/>
    <property type="match status" value="1"/>
</dbReference>
<dbReference type="HAMAP" id="MF_00245">
    <property type="entry name" value="UPF0122"/>
    <property type="match status" value="1"/>
</dbReference>
<dbReference type="InterPro" id="IPR013324">
    <property type="entry name" value="RNA_pol_sigma_r3/r4-like"/>
</dbReference>
<dbReference type="InterPro" id="IPR007394">
    <property type="entry name" value="UPF0122"/>
</dbReference>
<dbReference type="InterPro" id="IPR054831">
    <property type="entry name" value="UPF0122_fam_protein"/>
</dbReference>
<dbReference type="InterPro" id="IPR036388">
    <property type="entry name" value="WH-like_DNA-bd_sf"/>
</dbReference>
<dbReference type="NCBIfam" id="NF001072">
    <property type="entry name" value="PRK00118.2-2"/>
    <property type="match status" value="1"/>
</dbReference>
<dbReference type="NCBIfam" id="NF045758">
    <property type="entry name" value="YlxM"/>
    <property type="match status" value="1"/>
</dbReference>
<dbReference type="PANTHER" id="PTHR40083">
    <property type="entry name" value="UPF0122 PROTEIN CBO2450/CLC_2298"/>
    <property type="match status" value="1"/>
</dbReference>
<dbReference type="PANTHER" id="PTHR40083:SF1">
    <property type="entry name" value="UPF0122 PROTEIN YLXM"/>
    <property type="match status" value="1"/>
</dbReference>
<dbReference type="Pfam" id="PF04297">
    <property type="entry name" value="UPF0122"/>
    <property type="match status" value="1"/>
</dbReference>
<dbReference type="SUPFAM" id="SSF88659">
    <property type="entry name" value="Sigma3 and sigma4 domains of RNA polymerase sigma factors"/>
    <property type="match status" value="1"/>
</dbReference>